<sequence>MSVRFIIGRSGSGKTTMCLKEMIDQLAQKPDGDPIIYLVPEQMTFQSEYALMNGSLKGMIRAQVFSFTRLAWRILQETGGMSRHHLTQTGVHMLLRKIVEQQKEQLTLFRKAADKRGFIEQLEQMLTEYKRYCVTPATLKQTEEQLRRHATANETVLADKLKDTAMIFEQFEQQMAHHYVDSEDYLRLLAEKIRHSSYMKRARIYMDGFYEFTPQEYMVIEQLFIHCPHVTVALTLDAPYEQLPDDLHVFRNTWRTYAQLRDIALQNGVPIEKVEQLRHNVRHKHEELRHLEAHYDDRPVCKWEKQTEAIIIGEATTRRAEIEGIAREIIRLVRDEGYRYRDIALLIRNVGDYRNVLKTVFADYRIPYFIDEKEPMLDHPFIEWLRASMEAVRTNFRYEAVFRAVKTDFFFHLDQPVHDMRMAMDQLENYVLAFGIQGDKWTEHWTYRKYKGLEGVHAPQTDEEKRYEQQLNEWRKLVISPLLVLQKRLKQAKTGREQCEALYAYAEHLQIPQKLERLRDEAEERGDLSVARHHEQVWQAFIDLLDQYVEILGDETLSLETFLTIIETGFESLQFSLVPPATDQVLIAHFDRSRLSNIRCTFLVGVNEGVIPMRKNDDGMLSETDRELLYHYSLHVAPASRERMLDEPFLLYLALVSSSERLYVTYALSNEQEKTLLPSMFIKRLTDMFPNVTKMQWGTDPFLLPLQQQLAYVTNDVATLGPLVQQLEAWKRQYAIEPMWWDVYNAYVQHEQWKERIAVVVRALFYENRAKRLNKQLAKELYGKKVKASISRMETFNRCPFAHFAAHGLKLKERTVFQLKAPDMGQLFHQALKVIADRLRQEQLPWSQLSKQQCEQLSYEAVEQIAPYIQQEVLLSTHRYRYMKKKLQTIMTKATTVLSEHAKRSGFVPIGVELGFGDGEPLPPLTFTLSDGTVLQFVGRIDRVDQAMSEQGVLLRVIDYKSKQKTLDLTEVYYGLALQMLAYLDIVLEYAEKLVGTSAFPAGVLYFPIHNPMMKVNEWLDEHELEKKFLEQFKMGGYVLADEKTVRLMDEHVEPGTSSLIIPVRLNKNGTFAQHSKVLTEQQFTMLRQHVRRFIVDVGEQMIEGVTHIAPYKQKNKTACQYCEFRDVCQFDEGVDAEQYRVLTPKNIDEWLKG</sequence>
<reference key="1">
    <citation type="journal article" date="2008" name="Genome Biol.">
        <title>Encapsulated in silica: genome, proteome and physiology of the thermophilic bacterium Anoxybacillus flavithermus WK1.</title>
        <authorList>
            <person name="Saw J.H."/>
            <person name="Mountain B.W."/>
            <person name="Feng L."/>
            <person name="Omelchenko M.V."/>
            <person name="Hou S."/>
            <person name="Saito J.A."/>
            <person name="Stott M.B."/>
            <person name="Li D."/>
            <person name="Zhao G."/>
            <person name="Wu J."/>
            <person name="Galperin M.Y."/>
            <person name="Koonin E.V."/>
            <person name="Makarova K.S."/>
            <person name="Wolf Y.I."/>
            <person name="Rigden D.J."/>
            <person name="Dunfield P.F."/>
            <person name="Wang L."/>
            <person name="Alam M."/>
        </authorList>
    </citation>
    <scope>NUCLEOTIDE SEQUENCE [LARGE SCALE GENOMIC DNA]</scope>
    <source>
        <strain>DSM 21510 / WK1</strain>
    </source>
</reference>
<gene>
    <name evidence="1" type="primary">addB</name>
    <name type="ordered locus">Aflv_2231</name>
</gene>
<comment type="function">
    <text evidence="1">The heterodimer acts as both an ATP-dependent DNA helicase and an ATP-dependent, dual-direction single-stranded exonuclease. Recognizes the chi site generating a DNA molecule suitable for the initiation of homologous recombination. The AddB subunit has 5' -&gt; 3' nuclease activity but not helicase activity.</text>
</comment>
<comment type="cofactor">
    <cofactor evidence="1">
        <name>Mg(2+)</name>
        <dbReference type="ChEBI" id="CHEBI:18420"/>
    </cofactor>
</comment>
<comment type="cofactor">
    <cofactor evidence="1">
        <name>[4Fe-4S] cluster</name>
        <dbReference type="ChEBI" id="CHEBI:49883"/>
    </cofactor>
    <text evidence="1">Binds 1 [4Fe-4S] cluster.</text>
</comment>
<comment type="subunit">
    <text evidence="1">Heterodimer of AddA and AddB.</text>
</comment>
<comment type="miscellaneous">
    <text evidence="1">Despite having conserved helicase domains, this subunit does not have helicase activity.</text>
</comment>
<comment type="similarity">
    <text evidence="1">Belongs to the helicase family. AddB/RexB type 1 subfamily.</text>
</comment>
<comment type="sequence caution" evidence="2">
    <conflict type="erroneous initiation">
        <sequence resource="EMBL-CDS" id="ACJ34590"/>
    </conflict>
    <text>Extended N-terminus.</text>
</comment>
<keyword id="KW-0004">4Fe-4S</keyword>
<keyword id="KW-0067">ATP-binding</keyword>
<keyword id="KW-0227">DNA damage</keyword>
<keyword id="KW-0234">DNA repair</keyword>
<keyword id="KW-0238">DNA-binding</keyword>
<keyword id="KW-0269">Exonuclease</keyword>
<keyword id="KW-0347">Helicase</keyword>
<keyword id="KW-0378">Hydrolase</keyword>
<keyword id="KW-0408">Iron</keyword>
<keyword id="KW-0411">Iron-sulfur</keyword>
<keyword id="KW-0479">Metal-binding</keyword>
<keyword id="KW-0540">Nuclease</keyword>
<keyword id="KW-0547">Nucleotide-binding</keyword>
<name>ADDB_ANOFW</name>
<organism>
    <name type="scientific">Anoxybacillus flavithermus (strain DSM 21510 / WK1)</name>
    <dbReference type="NCBI Taxonomy" id="491915"/>
    <lineage>
        <taxon>Bacteria</taxon>
        <taxon>Bacillati</taxon>
        <taxon>Bacillota</taxon>
        <taxon>Bacilli</taxon>
        <taxon>Bacillales</taxon>
        <taxon>Anoxybacillaceae</taxon>
        <taxon>Anoxybacillus</taxon>
    </lineage>
</organism>
<protein>
    <recommendedName>
        <fullName evidence="1">ATP-dependent helicase/deoxyribonuclease subunit B</fullName>
        <ecNumber evidence="1">3.1.-.-</ecNumber>
    </recommendedName>
    <alternativeName>
        <fullName evidence="1">ATP-dependent helicase/nuclease subunit AddB</fullName>
    </alternativeName>
</protein>
<evidence type="ECO:0000255" key="1">
    <source>
        <dbReference type="HAMAP-Rule" id="MF_01452"/>
    </source>
</evidence>
<evidence type="ECO:0000305" key="2"/>
<proteinExistence type="inferred from homology"/>
<feature type="chain" id="PRO_0000379150" description="ATP-dependent helicase/deoxyribonuclease subunit B">
    <location>
        <begin position="1"/>
        <end position="1154"/>
    </location>
</feature>
<feature type="domain" description="UvrD-like helicase ATP-binding" evidence="1">
    <location>
        <begin position="1"/>
        <end position="284"/>
    </location>
</feature>
<feature type="domain" description="UvrD-like helicase C-terminal" evidence="1">
    <location>
        <begin position="279"/>
        <end position="583"/>
    </location>
</feature>
<feature type="binding site" evidence="1">
    <location>
        <begin position="8"/>
        <end position="15"/>
    </location>
    <ligand>
        <name>ATP</name>
        <dbReference type="ChEBI" id="CHEBI:30616"/>
    </ligand>
</feature>
<feature type="binding site" evidence="1">
    <location>
        <position position="799"/>
    </location>
    <ligand>
        <name>[4Fe-4S] cluster</name>
        <dbReference type="ChEBI" id="CHEBI:49883"/>
    </ligand>
</feature>
<feature type="binding site" evidence="1">
    <location>
        <position position="1120"/>
    </location>
    <ligand>
        <name>[4Fe-4S] cluster</name>
        <dbReference type="ChEBI" id="CHEBI:49883"/>
    </ligand>
</feature>
<feature type="binding site" evidence="1">
    <location>
        <position position="1123"/>
    </location>
    <ligand>
        <name>[4Fe-4S] cluster</name>
        <dbReference type="ChEBI" id="CHEBI:49883"/>
    </ligand>
</feature>
<feature type="binding site" evidence="1">
    <location>
        <position position="1129"/>
    </location>
    <ligand>
        <name>[4Fe-4S] cluster</name>
        <dbReference type="ChEBI" id="CHEBI:49883"/>
    </ligand>
</feature>
<accession>B7GM52</accession>
<dbReference type="EC" id="3.1.-.-" evidence="1"/>
<dbReference type="EMBL" id="CP000922">
    <property type="protein sequence ID" value="ACJ34590.1"/>
    <property type="status" value="ALT_INIT"/>
    <property type="molecule type" value="Genomic_DNA"/>
</dbReference>
<dbReference type="RefSeq" id="WP_041638832.1">
    <property type="nucleotide sequence ID" value="NC_011567.1"/>
</dbReference>
<dbReference type="SMR" id="B7GM52"/>
<dbReference type="STRING" id="491915.Aflv_2231"/>
<dbReference type="GeneID" id="7038484"/>
<dbReference type="KEGG" id="afl:Aflv_2231"/>
<dbReference type="PATRIC" id="fig|491915.6.peg.2291"/>
<dbReference type="eggNOG" id="COG3857">
    <property type="taxonomic scope" value="Bacteria"/>
</dbReference>
<dbReference type="HOGENOM" id="CLU_007838_0_0_9"/>
<dbReference type="Proteomes" id="UP000000742">
    <property type="component" value="Chromosome"/>
</dbReference>
<dbReference type="GO" id="GO:0051539">
    <property type="term" value="F:4 iron, 4 sulfur cluster binding"/>
    <property type="evidence" value="ECO:0007669"/>
    <property type="project" value="UniProtKB-KW"/>
</dbReference>
<dbReference type="GO" id="GO:0008409">
    <property type="term" value="F:5'-3' exonuclease activity"/>
    <property type="evidence" value="ECO:0007669"/>
    <property type="project" value="UniProtKB-UniRule"/>
</dbReference>
<dbReference type="GO" id="GO:0005524">
    <property type="term" value="F:ATP binding"/>
    <property type="evidence" value="ECO:0007669"/>
    <property type="project" value="UniProtKB-UniRule"/>
</dbReference>
<dbReference type="GO" id="GO:0003690">
    <property type="term" value="F:double-stranded DNA binding"/>
    <property type="evidence" value="ECO:0007669"/>
    <property type="project" value="UniProtKB-UniRule"/>
</dbReference>
<dbReference type="GO" id="GO:0004386">
    <property type="term" value="F:helicase activity"/>
    <property type="evidence" value="ECO:0007669"/>
    <property type="project" value="UniProtKB-KW"/>
</dbReference>
<dbReference type="GO" id="GO:0046872">
    <property type="term" value="F:metal ion binding"/>
    <property type="evidence" value="ECO:0007669"/>
    <property type="project" value="UniProtKB-KW"/>
</dbReference>
<dbReference type="GO" id="GO:0000724">
    <property type="term" value="P:double-strand break repair via homologous recombination"/>
    <property type="evidence" value="ECO:0007669"/>
    <property type="project" value="UniProtKB-UniRule"/>
</dbReference>
<dbReference type="Gene3D" id="3.90.320.10">
    <property type="match status" value="1"/>
</dbReference>
<dbReference type="Gene3D" id="6.10.140.1030">
    <property type="match status" value="1"/>
</dbReference>
<dbReference type="Gene3D" id="3.40.50.300">
    <property type="entry name" value="P-loop containing nucleotide triphosphate hydrolases"/>
    <property type="match status" value="3"/>
</dbReference>
<dbReference type="HAMAP" id="MF_01452">
    <property type="entry name" value="AddB_type1"/>
    <property type="match status" value="1"/>
</dbReference>
<dbReference type="InterPro" id="IPR049035">
    <property type="entry name" value="ADDB_N"/>
</dbReference>
<dbReference type="InterPro" id="IPR014140">
    <property type="entry name" value="DNA_helicase_suAddB"/>
</dbReference>
<dbReference type="InterPro" id="IPR014017">
    <property type="entry name" value="DNA_helicase_UvrD-like_C"/>
</dbReference>
<dbReference type="InterPro" id="IPR027417">
    <property type="entry name" value="P-loop_NTPase"/>
</dbReference>
<dbReference type="InterPro" id="IPR011604">
    <property type="entry name" value="PDDEXK-like_dom_sf"/>
</dbReference>
<dbReference type="InterPro" id="IPR038726">
    <property type="entry name" value="PDDEXK_AddAB-type"/>
</dbReference>
<dbReference type="NCBIfam" id="TIGR02773">
    <property type="entry name" value="addB_Gpos"/>
    <property type="match status" value="1"/>
</dbReference>
<dbReference type="PANTHER" id="PTHR30591">
    <property type="entry name" value="RECBCD ENZYME SUBUNIT RECC"/>
    <property type="match status" value="1"/>
</dbReference>
<dbReference type="PANTHER" id="PTHR30591:SF1">
    <property type="entry name" value="RECBCD ENZYME SUBUNIT RECC"/>
    <property type="match status" value="1"/>
</dbReference>
<dbReference type="Pfam" id="PF21445">
    <property type="entry name" value="ADDB_N"/>
    <property type="match status" value="1"/>
</dbReference>
<dbReference type="Pfam" id="PF12705">
    <property type="entry name" value="PDDEXK_1"/>
    <property type="match status" value="1"/>
</dbReference>
<dbReference type="Pfam" id="PF13361">
    <property type="entry name" value="UvrD_C"/>
    <property type="match status" value="1"/>
</dbReference>
<dbReference type="SUPFAM" id="SSF52540">
    <property type="entry name" value="P-loop containing nucleoside triphosphate hydrolases"/>
    <property type="match status" value="1"/>
</dbReference>
<dbReference type="PROSITE" id="PS51198">
    <property type="entry name" value="UVRD_HELICASE_ATP_BIND"/>
    <property type="match status" value="1"/>
</dbReference>
<dbReference type="PROSITE" id="PS51217">
    <property type="entry name" value="UVRD_HELICASE_CTER"/>
    <property type="match status" value="1"/>
</dbReference>